<gene>
    <name type="ordered locus">YG5714_0048</name>
</gene>
<organism>
    <name type="scientific">Saccharolobus islandicus (strain Y.G.57.14 / Yellowstone #1)</name>
    <name type="common">Sulfolobus islandicus</name>
    <dbReference type="NCBI Taxonomy" id="439386"/>
    <lineage>
        <taxon>Archaea</taxon>
        <taxon>Thermoproteota</taxon>
        <taxon>Thermoprotei</taxon>
        <taxon>Sulfolobales</taxon>
        <taxon>Sulfolobaceae</taxon>
        <taxon>Saccharolobus</taxon>
    </lineage>
</organism>
<sequence length="176" mass="19114">MVTIALGSKNPVKINATKEALDVLKLNWDLIGIEVDSGVDKQPFCDQTYVGARNRALNVIRVTNADIGLGIEGGVCNVYGKFIANAVVYVITKEGLENFAISSSFTLPSSMVSLILQGKELGEASDIIFKTNNSKTKEGAIGLLTNNVINRKMLYVQPIVLALYPIYNTMINNTPF</sequence>
<feature type="chain" id="PRO_1000212396" description="Probable inosine/xanthosine triphosphatase">
    <location>
        <begin position="1"/>
        <end position="176"/>
    </location>
</feature>
<feature type="binding site" evidence="1">
    <location>
        <position position="36"/>
    </location>
    <ligand>
        <name>Mg(2+)</name>
        <dbReference type="ChEBI" id="CHEBI:18420"/>
    </ligand>
</feature>
<reference key="1">
    <citation type="journal article" date="2009" name="Proc. Natl. Acad. Sci. U.S.A.">
        <title>Biogeography of the Sulfolobus islandicus pan-genome.</title>
        <authorList>
            <person name="Reno M.L."/>
            <person name="Held N.L."/>
            <person name="Fields C.J."/>
            <person name="Burke P.V."/>
            <person name="Whitaker R.J."/>
        </authorList>
    </citation>
    <scope>NUCLEOTIDE SEQUENCE [LARGE SCALE GENOMIC DNA]</scope>
    <source>
        <strain>Y.G.57.14 / Yellowstone #1</strain>
    </source>
</reference>
<protein>
    <recommendedName>
        <fullName evidence="1">Probable inosine/xanthosine triphosphatase</fullName>
        <shortName evidence="1">ITPase/XTPase</shortName>
        <ecNumber evidence="1">3.6.1.73</ecNumber>
    </recommendedName>
    <alternativeName>
        <fullName evidence="1">Non-canonical purine NTP phosphatase</fullName>
    </alternativeName>
    <alternativeName>
        <fullName evidence="1">Non-standard purine NTP phosphatase</fullName>
    </alternativeName>
    <alternativeName>
        <fullName evidence="1">Nucleoside-triphosphate phosphatase</fullName>
        <shortName evidence="1">NTPase</shortName>
    </alternativeName>
</protein>
<keyword id="KW-0378">Hydrolase</keyword>
<keyword id="KW-0460">Magnesium</keyword>
<keyword id="KW-0464">Manganese</keyword>
<keyword id="KW-0479">Metal-binding</keyword>
<keyword id="KW-0546">Nucleotide metabolism</keyword>
<keyword id="KW-0547">Nucleotide-binding</keyword>
<name>NCPP_SACI7</name>
<dbReference type="EC" id="3.6.1.73" evidence="1"/>
<dbReference type="EMBL" id="CP001403">
    <property type="protein sequence ID" value="ACP44342.1"/>
    <property type="molecule type" value="Genomic_DNA"/>
</dbReference>
<dbReference type="RefSeq" id="WP_012712728.1">
    <property type="nucleotide sequence ID" value="NC_012622.1"/>
</dbReference>
<dbReference type="SMR" id="C3N7X4"/>
<dbReference type="KEGG" id="siy:YG5714_0048"/>
<dbReference type="HOGENOM" id="CLU_087417_0_0_2"/>
<dbReference type="Proteomes" id="UP000002308">
    <property type="component" value="Chromosome"/>
</dbReference>
<dbReference type="GO" id="GO:0103023">
    <property type="term" value="F:ITPase activity"/>
    <property type="evidence" value="ECO:0007669"/>
    <property type="project" value="UniProtKB-EC"/>
</dbReference>
<dbReference type="GO" id="GO:0046872">
    <property type="term" value="F:metal ion binding"/>
    <property type="evidence" value="ECO:0007669"/>
    <property type="project" value="UniProtKB-KW"/>
</dbReference>
<dbReference type="GO" id="GO:0000166">
    <property type="term" value="F:nucleotide binding"/>
    <property type="evidence" value="ECO:0007669"/>
    <property type="project" value="UniProtKB-KW"/>
</dbReference>
<dbReference type="GO" id="GO:0017111">
    <property type="term" value="F:ribonucleoside triphosphate phosphatase activity"/>
    <property type="evidence" value="ECO:0000250"/>
    <property type="project" value="UniProtKB"/>
</dbReference>
<dbReference type="GO" id="GO:0009117">
    <property type="term" value="P:nucleotide metabolic process"/>
    <property type="evidence" value="ECO:0007669"/>
    <property type="project" value="UniProtKB-KW"/>
</dbReference>
<dbReference type="GO" id="GO:0006772">
    <property type="term" value="P:thiamine metabolic process"/>
    <property type="evidence" value="ECO:0007669"/>
    <property type="project" value="TreeGrafter"/>
</dbReference>
<dbReference type="FunFam" id="3.90.950.10:FF:000002">
    <property type="entry name" value="Inosine/xanthosine triphosphatase"/>
    <property type="match status" value="1"/>
</dbReference>
<dbReference type="Gene3D" id="3.90.950.10">
    <property type="match status" value="1"/>
</dbReference>
<dbReference type="HAMAP" id="MF_00648">
    <property type="entry name" value="Non_canon_purine_NTPase_YjjX"/>
    <property type="match status" value="1"/>
</dbReference>
<dbReference type="InterPro" id="IPR029001">
    <property type="entry name" value="ITPase-like_fam"/>
</dbReference>
<dbReference type="InterPro" id="IPR002786">
    <property type="entry name" value="Non_canon_purine_NTPase"/>
</dbReference>
<dbReference type="InterPro" id="IPR026533">
    <property type="entry name" value="NTPase/PRRC1"/>
</dbReference>
<dbReference type="InterPro" id="IPR050299">
    <property type="entry name" value="YjjX_NTPase"/>
</dbReference>
<dbReference type="PANTHER" id="PTHR34699">
    <property type="match status" value="1"/>
</dbReference>
<dbReference type="PANTHER" id="PTHR34699:SF2">
    <property type="entry name" value="NON-CANONICAL PURINE NTP PHOSPHATASE_PRRC1 DOMAIN-CONTAINING PROTEIN"/>
    <property type="match status" value="1"/>
</dbReference>
<dbReference type="Pfam" id="PF01931">
    <property type="entry name" value="NTPase_I-T"/>
    <property type="match status" value="1"/>
</dbReference>
<dbReference type="SUPFAM" id="SSF52972">
    <property type="entry name" value="ITPase-like"/>
    <property type="match status" value="1"/>
</dbReference>
<evidence type="ECO:0000255" key="1">
    <source>
        <dbReference type="HAMAP-Rule" id="MF_00648"/>
    </source>
</evidence>
<comment type="function">
    <text evidence="1">Phosphatase that hydrolyzes non-canonical purine nucleotides such as XTP and ITP to their respective diphosphate derivatives. Probably excludes non-canonical purines from DNA/RNA precursor pool, thus preventing their incorporation into DNA/RNA and avoiding chromosomal lesions.</text>
</comment>
<comment type="catalytic activity">
    <reaction evidence="1">
        <text>XTP + H2O = XDP + phosphate + H(+)</text>
        <dbReference type="Rhea" id="RHEA:28406"/>
        <dbReference type="ChEBI" id="CHEBI:15377"/>
        <dbReference type="ChEBI" id="CHEBI:15378"/>
        <dbReference type="ChEBI" id="CHEBI:43474"/>
        <dbReference type="ChEBI" id="CHEBI:59884"/>
        <dbReference type="ChEBI" id="CHEBI:61314"/>
        <dbReference type="EC" id="3.6.1.73"/>
    </reaction>
</comment>
<comment type="catalytic activity">
    <reaction evidence="1">
        <text>ITP + H2O = IDP + phosphate + H(+)</text>
        <dbReference type="Rhea" id="RHEA:28330"/>
        <dbReference type="ChEBI" id="CHEBI:15377"/>
        <dbReference type="ChEBI" id="CHEBI:15378"/>
        <dbReference type="ChEBI" id="CHEBI:43474"/>
        <dbReference type="ChEBI" id="CHEBI:58280"/>
        <dbReference type="ChEBI" id="CHEBI:61402"/>
        <dbReference type="EC" id="3.6.1.73"/>
    </reaction>
</comment>
<comment type="cofactor">
    <cofactor evidence="1">
        <name>Mg(2+)</name>
        <dbReference type="ChEBI" id="CHEBI:18420"/>
    </cofactor>
    <cofactor evidence="1">
        <name>Mn(2+)</name>
        <dbReference type="ChEBI" id="CHEBI:29035"/>
    </cofactor>
    <text evidence="1">Binds 1 divalent metal cation per subunit; can use either Mg(2+) or Mn(2+).</text>
</comment>
<comment type="subunit">
    <text evidence="1">Homodimer.</text>
</comment>
<comment type="similarity">
    <text evidence="1">Belongs to the YjjX NTPase family.</text>
</comment>
<proteinExistence type="inferred from homology"/>
<accession>C3N7X4</accession>